<reference key="1">
    <citation type="journal article" date="2007" name="PLoS ONE">
        <title>Genome sequencing shows that European isolates of Francisella tularensis subspecies tularensis are almost identical to US laboratory strain Schu S4.</title>
        <authorList>
            <person name="Chaudhuri R.R."/>
            <person name="Ren C.-P."/>
            <person name="Desmond L."/>
            <person name="Vincent G.A."/>
            <person name="Silman N.J."/>
            <person name="Brehm J.K."/>
            <person name="Elmore M.J."/>
            <person name="Hudson M.J."/>
            <person name="Forsman M."/>
            <person name="Isherwood K.E."/>
            <person name="Gurycova D."/>
            <person name="Minton N.P."/>
            <person name="Titball R.W."/>
            <person name="Pallen M.J."/>
            <person name="Vipond R."/>
        </authorList>
    </citation>
    <scope>NUCLEOTIDE SEQUENCE [LARGE SCALE GENOMIC DNA]</scope>
    <source>
        <strain>FSC 198</strain>
    </source>
</reference>
<proteinExistence type="inferred from homology"/>
<evidence type="ECO:0000255" key="1">
    <source>
        <dbReference type="HAMAP-Rule" id="MF_01416"/>
    </source>
</evidence>
<gene>
    <name evidence="1" type="primary">atpH</name>
    <name type="ordered locus">FTF0061</name>
</gene>
<keyword id="KW-0066">ATP synthesis</keyword>
<keyword id="KW-0997">Cell inner membrane</keyword>
<keyword id="KW-1003">Cell membrane</keyword>
<keyword id="KW-0139">CF(1)</keyword>
<keyword id="KW-0375">Hydrogen ion transport</keyword>
<keyword id="KW-0406">Ion transport</keyword>
<keyword id="KW-0472">Membrane</keyword>
<keyword id="KW-0813">Transport</keyword>
<protein>
    <recommendedName>
        <fullName evidence="1">ATP synthase subunit delta</fullName>
    </recommendedName>
    <alternativeName>
        <fullName evidence="1">ATP synthase F(1) sector subunit delta</fullName>
    </alternativeName>
    <alternativeName>
        <fullName evidence="1">F-type ATPase subunit delta</fullName>
        <shortName evidence="1">F-ATPase subunit delta</shortName>
    </alternativeName>
</protein>
<dbReference type="EMBL" id="AM286280">
    <property type="protein sequence ID" value="CAL08077.1"/>
    <property type="molecule type" value="Genomic_DNA"/>
</dbReference>
<dbReference type="RefSeq" id="WP_003017341.1">
    <property type="nucleotide sequence ID" value="NC_008245.1"/>
</dbReference>
<dbReference type="SMR" id="Q14K09"/>
<dbReference type="KEGG" id="ftf:FTF0061"/>
<dbReference type="HOGENOM" id="CLU_085114_3_0_6"/>
<dbReference type="GO" id="GO:0005886">
    <property type="term" value="C:plasma membrane"/>
    <property type="evidence" value="ECO:0007669"/>
    <property type="project" value="UniProtKB-SubCell"/>
</dbReference>
<dbReference type="GO" id="GO:0045259">
    <property type="term" value="C:proton-transporting ATP synthase complex"/>
    <property type="evidence" value="ECO:0007669"/>
    <property type="project" value="UniProtKB-KW"/>
</dbReference>
<dbReference type="GO" id="GO:0046933">
    <property type="term" value="F:proton-transporting ATP synthase activity, rotational mechanism"/>
    <property type="evidence" value="ECO:0007669"/>
    <property type="project" value="UniProtKB-UniRule"/>
</dbReference>
<dbReference type="Gene3D" id="1.10.520.20">
    <property type="entry name" value="N-terminal domain of the delta subunit of the F1F0-ATP synthase"/>
    <property type="match status" value="1"/>
</dbReference>
<dbReference type="HAMAP" id="MF_01416">
    <property type="entry name" value="ATP_synth_delta_bact"/>
    <property type="match status" value="1"/>
</dbReference>
<dbReference type="InterPro" id="IPR026015">
    <property type="entry name" value="ATP_synth_OSCP/delta_N_sf"/>
</dbReference>
<dbReference type="InterPro" id="IPR020781">
    <property type="entry name" value="ATPase_OSCP/d_CS"/>
</dbReference>
<dbReference type="InterPro" id="IPR000711">
    <property type="entry name" value="ATPase_OSCP/dsu"/>
</dbReference>
<dbReference type="NCBIfam" id="TIGR01145">
    <property type="entry name" value="ATP_synt_delta"/>
    <property type="match status" value="1"/>
</dbReference>
<dbReference type="NCBIfam" id="NF004402">
    <property type="entry name" value="PRK05758.2-2"/>
    <property type="match status" value="1"/>
</dbReference>
<dbReference type="PANTHER" id="PTHR11910">
    <property type="entry name" value="ATP SYNTHASE DELTA CHAIN"/>
    <property type="match status" value="1"/>
</dbReference>
<dbReference type="Pfam" id="PF00213">
    <property type="entry name" value="OSCP"/>
    <property type="match status" value="1"/>
</dbReference>
<dbReference type="PRINTS" id="PR00125">
    <property type="entry name" value="ATPASEDELTA"/>
</dbReference>
<dbReference type="SUPFAM" id="SSF47928">
    <property type="entry name" value="N-terminal domain of the delta subunit of the F1F0-ATP synthase"/>
    <property type="match status" value="1"/>
</dbReference>
<dbReference type="PROSITE" id="PS00389">
    <property type="entry name" value="ATPASE_DELTA"/>
    <property type="match status" value="1"/>
</dbReference>
<accession>Q14K09</accession>
<name>ATPD_FRAT1</name>
<feature type="chain" id="PRO_1000184713" description="ATP synthase subunit delta">
    <location>
        <begin position="1"/>
        <end position="174"/>
    </location>
</feature>
<organism>
    <name type="scientific">Francisella tularensis subsp. tularensis (strain FSC 198)</name>
    <dbReference type="NCBI Taxonomy" id="393115"/>
    <lineage>
        <taxon>Bacteria</taxon>
        <taxon>Pseudomonadati</taxon>
        <taxon>Pseudomonadota</taxon>
        <taxon>Gammaproteobacteria</taxon>
        <taxon>Thiotrichales</taxon>
        <taxon>Francisellaceae</taxon>
        <taxon>Francisella</taxon>
    </lineage>
</organism>
<sequence length="174" mass="19202">MTNISVIAKPYAKAAFEFANEHNLLQQWSKLLQTFSELIKDKSVAAIVSSPTISQIEVVDALKKQLDENFFNFLALIAENKKMLIMPEIADQFESIKNIHNNVRVADVTLAYATDKNILDSLKTSLEKKFGCTIDMHINIDPAIIGGAVVKVGDTVIDSSVSGHLEKLKSILLS</sequence>
<comment type="function">
    <text evidence="1">F(1)F(0) ATP synthase produces ATP from ADP in the presence of a proton or sodium gradient. F-type ATPases consist of two structural domains, F(1) containing the extramembraneous catalytic core and F(0) containing the membrane proton channel, linked together by a central stalk and a peripheral stalk. During catalysis, ATP synthesis in the catalytic domain of F(1) is coupled via a rotary mechanism of the central stalk subunits to proton translocation.</text>
</comment>
<comment type="function">
    <text evidence="1">This protein is part of the stalk that links CF(0) to CF(1). It either transmits conformational changes from CF(0) to CF(1) or is implicated in proton conduction.</text>
</comment>
<comment type="subunit">
    <text evidence="1">F-type ATPases have 2 components, F(1) - the catalytic core - and F(0) - the membrane proton channel. F(1) has five subunits: alpha(3), beta(3), gamma(1), delta(1), epsilon(1). F(0) has three main subunits: a(1), b(2) and c(10-14). The alpha and beta chains form an alternating ring which encloses part of the gamma chain. F(1) is attached to F(0) by a central stalk formed by the gamma and epsilon chains, while a peripheral stalk is formed by the delta and b chains.</text>
</comment>
<comment type="subcellular location">
    <subcellularLocation>
        <location evidence="1">Cell inner membrane</location>
        <topology evidence="1">Peripheral membrane protein</topology>
    </subcellularLocation>
</comment>
<comment type="similarity">
    <text evidence="1">Belongs to the ATPase delta chain family.</text>
</comment>